<accession>Q9ZZM2</accession>
<organism>
    <name type="scientific">Salmo salar</name>
    <name type="common">Atlantic salmon</name>
    <dbReference type="NCBI Taxonomy" id="8030"/>
    <lineage>
        <taxon>Eukaryota</taxon>
        <taxon>Metazoa</taxon>
        <taxon>Chordata</taxon>
        <taxon>Craniata</taxon>
        <taxon>Vertebrata</taxon>
        <taxon>Euteleostomi</taxon>
        <taxon>Actinopterygii</taxon>
        <taxon>Neopterygii</taxon>
        <taxon>Teleostei</taxon>
        <taxon>Protacanthopterygii</taxon>
        <taxon>Salmoniformes</taxon>
        <taxon>Salmonidae</taxon>
        <taxon>Salmoninae</taxon>
        <taxon>Salmo</taxon>
    </lineage>
</organism>
<dbReference type="EC" id="7.1.1.2"/>
<dbReference type="EMBL" id="U12143">
    <property type="protein sequence ID" value="AAD04744.1"/>
    <property type="molecule type" value="Genomic_DNA"/>
</dbReference>
<dbReference type="EMBL" id="AF133701">
    <property type="protein sequence ID" value="AAF61389.1"/>
    <property type="molecule type" value="Genomic_DNA"/>
</dbReference>
<dbReference type="PIR" id="T09958">
    <property type="entry name" value="T09958"/>
</dbReference>
<dbReference type="RefSeq" id="NP_008456.1">
    <property type="nucleotide sequence ID" value="NC_001960.1"/>
</dbReference>
<dbReference type="SMR" id="Q9ZZM2"/>
<dbReference type="STRING" id="8030.ENSSSAP00000000013"/>
<dbReference type="PaxDb" id="8030-ENSSSAP00000000013"/>
<dbReference type="GeneID" id="808317"/>
<dbReference type="KEGG" id="sasa:808317"/>
<dbReference type="CTD" id="4541"/>
<dbReference type="Proteomes" id="UP000087266">
    <property type="component" value="Mitochondrion MT"/>
</dbReference>
<dbReference type="Bgee" id="ENSSSAG00000000034">
    <property type="expression patterns" value="Expressed in mesonephros and 25 other cell types or tissues"/>
</dbReference>
<dbReference type="GO" id="GO:0031966">
    <property type="term" value="C:mitochondrial membrane"/>
    <property type="evidence" value="ECO:0007669"/>
    <property type="project" value="UniProtKB-SubCell"/>
</dbReference>
<dbReference type="GO" id="GO:0008137">
    <property type="term" value="F:NADH dehydrogenase (ubiquinone) activity"/>
    <property type="evidence" value="ECO:0007669"/>
    <property type="project" value="UniProtKB-EC"/>
</dbReference>
<dbReference type="Gene3D" id="1.20.120.1200">
    <property type="entry name" value="NADH-ubiquinone/plastoquinone oxidoreductase chain 6, subunit NuoJ"/>
    <property type="match status" value="1"/>
</dbReference>
<dbReference type="InterPro" id="IPR050269">
    <property type="entry name" value="ComplexI_Subunit6"/>
</dbReference>
<dbReference type="InterPro" id="IPR001457">
    <property type="entry name" value="NADH_UbQ/plastoQ_OxRdtase_su6"/>
</dbReference>
<dbReference type="InterPro" id="IPR042106">
    <property type="entry name" value="Nuo/plastoQ_OxRdtase_6_NuoJ"/>
</dbReference>
<dbReference type="PANTHER" id="PTHR11435">
    <property type="entry name" value="NADH UBIQUINONE OXIDOREDUCTASE SUBUNIT ND6"/>
    <property type="match status" value="1"/>
</dbReference>
<dbReference type="PANTHER" id="PTHR11435:SF1">
    <property type="entry name" value="NADH-UBIQUINONE OXIDOREDUCTASE CHAIN 6"/>
    <property type="match status" value="1"/>
</dbReference>
<dbReference type="Pfam" id="PF00499">
    <property type="entry name" value="Oxidored_q3"/>
    <property type="match status" value="1"/>
</dbReference>
<sequence length="173" mass="18388">MTYIVSLFLLGLVLGLVAVASNPAPYFAALGLVVAAGVGCGVLVGYGGSFLSLVLFLIYLGGMLVVFAYSAALAAEPFPESWGDRSVLGYVVVYTVGVMLVAGWFWSGWYETSWVVVDEFKEFSVLRGDTSGVALMYSYGGGMLIVCAWVLLLTLFVVLELTRGLSRGALRAV</sequence>
<gene>
    <name type="primary">MT-ND6</name>
    <name type="synonym">MTND6</name>
    <name type="synonym">NADH6</name>
    <name type="synonym">ND6</name>
</gene>
<geneLocation type="mitochondrion"/>
<protein>
    <recommendedName>
        <fullName>NADH-ubiquinone oxidoreductase chain 6</fullName>
        <ecNumber>7.1.1.2</ecNumber>
    </recommendedName>
    <alternativeName>
        <fullName>NADH dehydrogenase subunit 6</fullName>
    </alternativeName>
</protein>
<evidence type="ECO:0000250" key="1"/>
<evidence type="ECO:0000255" key="2"/>
<evidence type="ECO:0000305" key="3"/>
<comment type="function">
    <text evidence="1">Core subunit of the mitochondrial membrane respiratory chain NADH dehydrogenase (Complex I) that is believed to belong to the minimal assembly required for catalysis. Complex I functions in the transfer of electrons from NADH to the respiratory chain. The immediate electron acceptor for the enzyme is believed to be ubiquinone (By similarity).</text>
</comment>
<comment type="catalytic activity">
    <reaction>
        <text>a ubiquinone + NADH + 5 H(+)(in) = a ubiquinol + NAD(+) + 4 H(+)(out)</text>
        <dbReference type="Rhea" id="RHEA:29091"/>
        <dbReference type="Rhea" id="RHEA-COMP:9565"/>
        <dbReference type="Rhea" id="RHEA-COMP:9566"/>
        <dbReference type="ChEBI" id="CHEBI:15378"/>
        <dbReference type="ChEBI" id="CHEBI:16389"/>
        <dbReference type="ChEBI" id="CHEBI:17976"/>
        <dbReference type="ChEBI" id="CHEBI:57540"/>
        <dbReference type="ChEBI" id="CHEBI:57945"/>
        <dbReference type="EC" id="7.1.1.2"/>
    </reaction>
</comment>
<comment type="subcellular location">
    <subcellularLocation>
        <location evidence="3">Mitochondrion membrane</location>
        <topology evidence="3">Multi-pass membrane protein</topology>
    </subcellularLocation>
</comment>
<comment type="similarity">
    <text evidence="3">Belongs to the complex I subunit 6 family.</text>
</comment>
<name>NU6M_SALSA</name>
<feature type="chain" id="PRO_0000118330" description="NADH-ubiquinone oxidoreductase chain 6">
    <location>
        <begin position="1"/>
        <end position="173"/>
    </location>
</feature>
<feature type="transmembrane region" description="Helical" evidence="2">
    <location>
        <begin position="1"/>
        <end position="21"/>
    </location>
</feature>
<feature type="transmembrane region" description="Helical" evidence="2">
    <location>
        <begin position="27"/>
        <end position="47"/>
    </location>
</feature>
<feature type="transmembrane region" description="Helical" evidence="2">
    <location>
        <begin position="53"/>
        <end position="73"/>
    </location>
</feature>
<feature type="transmembrane region" description="Helical" evidence="2">
    <location>
        <begin position="86"/>
        <end position="106"/>
    </location>
</feature>
<feature type="transmembrane region" description="Helical" evidence="2">
    <location>
        <begin position="139"/>
        <end position="159"/>
    </location>
</feature>
<reference key="1">
    <citation type="journal article" date="1999" name="Gene">
        <title>The complete mitochondrial DNA sequence of the Atlantic salmon, Salmo salar.</title>
        <authorList>
            <person name="Hurst C.D."/>
            <person name="Bartlett S.E."/>
            <person name="Davidson W.S."/>
            <person name="Bruce I.J."/>
        </authorList>
    </citation>
    <scope>NUCLEOTIDE SEQUENCE [GENOMIC DNA]</scope>
    <source>
        <tissue>Liver</tissue>
    </source>
</reference>
<reference key="2">
    <citation type="submission" date="1999-03" db="EMBL/GenBank/DDBJ databases">
        <title>The complete mitochondrial genome sequence of a teleost, Salmo salar, and comparisons with other salmoniformes.</title>
        <authorList>
            <person name="Arnason U."/>
            <person name="Johnsson E."/>
            <person name="Rasmussen A.S."/>
        </authorList>
    </citation>
    <scope>NUCLEOTIDE SEQUENCE [GENOMIC DNA]</scope>
</reference>
<keyword id="KW-0249">Electron transport</keyword>
<keyword id="KW-0472">Membrane</keyword>
<keyword id="KW-0496">Mitochondrion</keyword>
<keyword id="KW-0520">NAD</keyword>
<keyword id="KW-1185">Reference proteome</keyword>
<keyword id="KW-0679">Respiratory chain</keyword>
<keyword id="KW-1278">Translocase</keyword>
<keyword id="KW-0812">Transmembrane</keyword>
<keyword id="KW-1133">Transmembrane helix</keyword>
<keyword id="KW-0813">Transport</keyword>
<keyword id="KW-0830">Ubiquinone</keyword>
<proteinExistence type="inferred from homology"/>